<comment type="function">
    <text evidence="1">Involved in the glycolate utilization. Catalyzes the condensation and subsequent hydrolysis of acetyl-coenzyme A (acetyl-CoA) and glyoxylate to form malate and CoA.</text>
</comment>
<comment type="catalytic activity">
    <reaction evidence="1">
        <text>glyoxylate + acetyl-CoA + H2O = (S)-malate + CoA + H(+)</text>
        <dbReference type="Rhea" id="RHEA:18181"/>
        <dbReference type="ChEBI" id="CHEBI:15377"/>
        <dbReference type="ChEBI" id="CHEBI:15378"/>
        <dbReference type="ChEBI" id="CHEBI:15589"/>
        <dbReference type="ChEBI" id="CHEBI:36655"/>
        <dbReference type="ChEBI" id="CHEBI:57287"/>
        <dbReference type="ChEBI" id="CHEBI:57288"/>
        <dbReference type="EC" id="2.3.3.9"/>
    </reaction>
</comment>
<comment type="cofactor">
    <cofactor evidence="1">
        <name>Mg(2+)</name>
        <dbReference type="ChEBI" id="CHEBI:18420"/>
    </cofactor>
</comment>
<comment type="pathway">
    <text evidence="1">Carbohydrate metabolism; glyoxylate cycle; (S)-malate from isocitrate: step 2/2.</text>
</comment>
<comment type="subunit">
    <text evidence="1">Monomer.</text>
</comment>
<comment type="subcellular location">
    <subcellularLocation>
        <location evidence="1">Cytoplasm</location>
    </subcellularLocation>
</comment>
<comment type="similarity">
    <text evidence="1">Belongs to the malate synthase family. GlcB subfamily.</text>
</comment>
<protein>
    <recommendedName>
        <fullName evidence="1">Malate synthase G</fullName>
        <ecNumber evidence="1">2.3.3.9</ecNumber>
    </recommendedName>
</protein>
<name>MASZ_BRUSU</name>
<evidence type="ECO:0000255" key="1">
    <source>
        <dbReference type="HAMAP-Rule" id="MF_00641"/>
    </source>
</evidence>
<gene>
    <name evidence="1" type="primary">glcB</name>
    <name type="ordered locus">BR1648</name>
    <name type="ordered locus">BS1330_I1642</name>
</gene>
<dbReference type="EC" id="2.3.3.9" evidence="1"/>
<dbReference type="EMBL" id="AE014291">
    <property type="protein sequence ID" value="AAN30550.1"/>
    <property type="molecule type" value="Genomic_DNA"/>
</dbReference>
<dbReference type="EMBL" id="CP002997">
    <property type="protein sequence ID" value="AEM18966.1"/>
    <property type="molecule type" value="Genomic_DNA"/>
</dbReference>
<dbReference type="RefSeq" id="WP_006198130.1">
    <property type="nucleotide sequence ID" value="NC_004310.3"/>
</dbReference>
<dbReference type="SMR" id="Q8FZ50"/>
<dbReference type="GeneID" id="45052634"/>
<dbReference type="KEGG" id="bms:BR1648"/>
<dbReference type="KEGG" id="bsi:BS1330_I1642"/>
<dbReference type="PATRIC" id="fig|204722.22.peg.205"/>
<dbReference type="HOGENOM" id="CLU_028446_1_0_5"/>
<dbReference type="PhylomeDB" id="Q8FZ50"/>
<dbReference type="UniPathway" id="UPA00703">
    <property type="reaction ID" value="UER00720"/>
</dbReference>
<dbReference type="Proteomes" id="UP000007104">
    <property type="component" value="Chromosome I"/>
</dbReference>
<dbReference type="GO" id="GO:0005829">
    <property type="term" value="C:cytosol"/>
    <property type="evidence" value="ECO:0007669"/>
    <property type="project" value="TreeGrafter"/>
</dbReference>
<dbReference type="GO" id="GO:0000287">
    <property type="term" value="F:magnesium ion binding"/>
    <property type="evidence" value="ECO:0007669"/>
    <property type="project" value="TreeGrafter"/>
</dbReference>
<dbReference type="GO" id="GO:0004474">
    <property type="term" value="F:malate synthase activity"/>
    <property type="evidence" value="ECO:0007669"/>
    <property type="project" value="UniProtKB-UniRule"/>
</dbReference>
<dbReference type="GO" id="GO:0009436">
    <property type="term" value="P:glyoxylate catabolic process"/>
    <property type="evidence" value="ECO:0007669"/>
    <property type="project" value="TreeGrafter"/>
</dbReference>
<dbReference type="GO" id="GO:0006097">
    <property type="term" value="P:glyoxylate cycle"/>
    <property type="evidence" value="ECO:0007669"/>
    <property type="project" value="UniProtKB-UniRule"/>
</dbReference>
<dbReference type="GO" id="GO:0006099">
    <property type="term" value="P:tricarboxylic acid cycle"/>
    <property type="evidence" value="ECO:0007669"/>
    <property type="project" value="UniProtKB-KW"/>
</dbReference>
<dbReference type="CDD" id="cd00728">
    <property type="entry name" value="malate_synt_G"/>
    <property type="match status" value="1"/>
</dbReference>
<dbReference type="FunFam" id="3.20.20.360:FF:000002">
    <property type="entry name" value="Malate synthase G"/>
    <property type="match status" value="1"/>
</dbReference>
<dbReference type="Gene3D" id="3.20.20.360">
    <property type="entry name" value="Malate synthase, domain 3"/>
    <property type="match status" value="2"/>
</dbReference>
<dbReference type="Gene3D" id="1.20.1220.12">
    <property type="entry name" value="Malate synthase, domain III"/>
    <property type="match status" value="1"/>
</dbReference>
<dbReference type="HAMAP" id="MF_00641">
    <property type="entry name" value="Malate_synth_G"/>
    <property type="match status" value="1"/>
</dbReference>
<dbReference type="InterPro" id="IPR044856">
    <property type="entry name" value="Malate_synth_C_sf"/>
</dbReference>
<dbReference type="InterPro" id="IPR011076">
    <property type="entry name" value="Malate_synth_sf"/>
</dbReference>
<dbReference type="InterPro" id="IPR001465">
    <property type="entry name" value="Malate_synthase_TIM"/>
</dbReference>
<dbReference type="InterPro" id="IPR006253">
    <property type="entry name" value="Malate_synthG"/>
</dbReference>
<dbReference type="InterPro" id="IPR048355">
    <property type="entry name" value="MS_C"/>
</dbReference>
<dbReference type="InterPro" id="IPR048356">
    <property type="entry name" value="MS_N"/>
</dbReference>
<dbReference type="InterPro" id="IPR046363">
    <property type="entry name" value="MS_N_TIM-barrel_dom"/>
</dbReference>
<dbReference type="InterPro" id="IPR048357">
    <property type="entry name" value="MSG_insertion"/>
</dbReference>
<dbReference type="NCBIfam" id="TIGR01345">
    <property type="entry name" value="malate_syn_G"/>
    <property type="match status" value="1"/>
</dbReference>
<dbReference type="NCBIfam" id="NF002825">
    <property type="entry name" value="PRK02999.1"/>
    <property type="match status" value="1"/>
</dbReference>
<dbReference type="PANTHER" id="PTHR42739">
    <property type="entry name" value="MALATE SYNTHASE G"/>
    <property type="match status" value="1"/>
</dbReference>
<dbReference type="PANTHER" id="PTHR42739:SF1">
    <property type="entry name" value="MALATE SYNTHASE G"/>
    <property type="match status" value="1"/>
</dbReference>
<dbReference type="Pfam" id="PF20659">
    <property type="entry name" value="MS_C"/>
    <property type="match status" value="1"/>
</dbReference>
<dbReference type="Pfam" id="PF20656">
    <property type="entry name" value="MS_N"/>
    <property type="match status" value="1"/>
</dbReference>
<dbReference type="Pfam" id="PF01274">
    <property type="entry name" value="MS_TIM-barrel"/>
    <property type="match status" value="1"/>
</dbReference>
<dbReference type="Pfam" id="PF20658">
    <property type="entry name" value="MSG_insertion"/>
    <property type="match status" value="1"/>
</dbReference>
<dbReference type="SUPFAM" id="SSF51645">
    <property type="entry name" value="Malate synthase G"/>
    <property type="match status" value="1"/>
</dbReference>
<feature type="chain" id="PRO_0000166883" description="Malate synthase G">
    <location>
        <begin position="1"/>
        <end position="728"/>
    </location>
</feature>
<feature type="active site" description="Proton acceptor" evidence="1">
    <location>
        <position position="345"/>
    </location>
</feature>
<feature type="active site" description="Proton donor" evidence="1">
    <location>
        <position position="636"/>
    </location>
</feature>
<feature type="binding site" evidence="1">
    <location>
        <position position="123"/>
    </location>
    <ligand>
        <name>acetyl-CoA</name>
        <dbReference type="ChEBI" id="CHEBI:57288"/>
    </ligand>
</feature>
<feature type="binding site" evidence="1">
    <location>
        <begin position="130"/>
        <end position="131"/>
    </location>
    <ligand>
        <name>acetyl-CoA</name>
        <dbReference type="ChEBI" id="CHEBI:57288"/>
    </ligand>
</feature>
<feature type="binding site" evidence="1">
    <location>
        <position position="281"/>
    </location>
    <ligand>
        <name>acetyl-CoA</name>
        <dbReference type="ChEBI" id="CHEBI:57288"/>
    </ligand>
</feature>
<feature type="binding site" evidence="1">
    <location>
        <position position="318"/>
    </location>
    <ligand>
        <name>acetyl-CoA</name>
        <dbReference type="ChEBI" id="CHEBI:57288"/>
    </ligand>
</feature>
<feature type="binding site" evidence="1">
    <location>
        <position position="345"/>
    </location>
    <ligand>
        <name>glyoxylate</name>
        <dbReference type="ChEBI" id="CHEBI:36655"/>
    </ligand>
</feature>
<feature type="binding site" evidence="1">
    <location>
        <position position="437"/>
    </location>
    <ligand>
        <name>glyoxylate</name>
        <dbReference type="ChEBI" id="CHEBI:36655"/>
    </ligand>
</feature>
<feature type="binding site" evidence="1">
    <location>
        <position position="437"/>
    </location>
    <ligand>
        <name>Mg(2+)</name>
        <dbReference type="ChEBI" id="CHEBI:18420"/>
    </ligand>
</feature>
<feature type="binding site" evidence="1">
    <location>
        <begin position="462"/>
        <end position="465"/>
    </location>
    <ligand>
        <name>glyoxylate</name>
        <dbReference type="ChEBI" id="CHEBI:36655"/>
    </ligand>
</feature>
<feature type="binding site" evidence="1">
    <location>
        <position position="465"/>
    </location>
    <ligand>
        <name>Mg(2+)</name>
        <dbReference type="ChEBI" id="CHEBI:18420"/>
    </ligand>
</feature>
<feature type="binding site" evidence="1">
    <location>
        <position position="546"/>
    </location>
    <ligand>
        <name>acetyl-CoA</name>
        <dbReference type="ChEBI" id="CHEBI:57288"/>
    </ligand>
</feature>
<feature type="modified residue" description="Cysteine sulfenic acid (-SOH)" evidence="1">
    <location>
        <position position="622"/>
    </location>
</feature>
<keyword id="KW-0963">Cytoplasm</keyword>
<keyword id="KW-0329">Glyoxylate bypass</keyword>
<keyword id="KW-0460">Magnesium</keyword>
<keyword id="KW-0479">Metal-binding</keyword>
<keyword id="KW-0558">Oxidation</keyword>
<keyword id="KW-0808">Transferase</keyword>
<keyword id="KW-0816">Tricarboxylic acid cycle</keyword>
<reference key="1">
    <citation type="journal article" date="2002" name="Proc. Natl. Acad. Sci. U.S.A.">
        <title>The Brucella suis genome reveals fundamental similarities between animal and plant pathogens and symbionts.</title>
        <authorList>
            <person name="Paulsen I.T."/>
            <person name="Seshadri R."/>
            <person name="Nelson K.E."/>
            <person name="Eisen J.A."/>
            <person name="Heidelberg J.F."/>
            <person name="Read T.D."/>
            <person name="Dodson R.J."/>
            <person name="Umayam L.A."/>
            <person name="Brinkac L.M."/>
            <person name="Beanan M.J."/>
            <person name="Daugherty S.C."/>
            <person name="DeBoy R.T."/>
            <person name="Durkin A.S."/>
            <person name="Kolonay J.F."/>
            <person name="Madupu R."/>
            <person name="Nelson W.C."/>
            <person name="Ayodeji B."/>
            <person name="Kraul M."/>
            <person name="Shetty J."/>
            <person name="Malek J.A."/>
            <person name="Van Aken S.E."/>
            <person name="Riedmuller S."/>
            <person name="Tettelin H."/>
            <person name="Gill S.R."/>
            <person name="White O."/>
            <person name="Salzberg S.L."/>
            <person name="Hoover D.L."/>
            <person name="Lindler L.E."/>
            <person name="Halling S.M."/>
            <person name="Boyle S.M."/>
            <person name="Fraser C.M."/>
        </authorList>
    </citation>
    <scope>NUCLEOTIDE SEQUENCE [LARGE SCALE GENOMIC DNA]</scope>
    <source>
        <strain>1330</strain>
    </source>
</reference>
<reference key="2">
    <citation type="journal article" date="2011" name="J. Bacteriol.">
        <title>Revised genome sequence of Brucella suis 1330.</title>
        <authorList>
            <person name="Tae H."/>
            <person name="Shallom S."/>
            <person name="Settlage R."/>
            <person name="Preston D."/>
            <person name="Adams L.G."/>
            <person name="Garner H.R."/>
        </authorList>
    </citation>
    <scope>NUCLEOTIDE SEQUENCE [LARGE SCALE GENOMIC DNA]</scope>
    <source>
        <strain>1330</strain>
    </source>
</reference>
<organism>
    <name type="scientific">Brucella suis biovar 1 (strain 1330)</name>
    <dbReference type="NCBI Taxonomy" id="204722"/>
    <lineage>
        <taxon>Bacteria</taxon>
        <taxon>Pseudomonadati</taxon>
        <taxon>Pseudomonadota</taxon>
        <taxon>Alphaproteobacteria</taxon>
        <taxon>Hyphomicrobiales</taxon>
        <taxon>Brucellaceae</taxon>
        <taxon>Brucella/Ochrobactrum group</taxon>
        <taxon>Brucella</taxon>
    </lineage>
</organism>
<proteinExistence type="inferred from homology"/>
<sequence length="728" mass="79967">MGSAEKRNYVEIEGLAVAPELVEFLAKEAAPGTGVEPEKFWKGFAAIIRDLAPKNRALLAKRDELQARIDAWYKENRDKGYSQADYQQFLKDIGYLLPEGGAFSVSTTNVDPEITHIAGPQLVVPVMNARYALNAANARWGSLYDALYGTDAISEADGAEKGKGYNPKRGEKVIAWAKNFLDESAPLSTGKWADVAGLAVNDGKLEIRLTDGSATTLKDESQFKGYNGDAASPTNVLLAKHNMHVDIVINADHPIGKTDPAHIADVVLESAISTIQDCEDSIAAVDAEDKVAVYRNWLGLMNGKLEDTFEKNGKQMTRRLNGDRTYTAPDGSTLTLKGHSLMLVRNVGHLMTNPAILDAEGNEVPEGIMDAAFTSLIALHDIGPNGRHMNSREGSVYIVKPKMHGPEEVAFANEIFTRTEEMLGMKPNTLKIGIMDEERRTTVNLKEAIRAAKDRVVFINTGFLDRTGDEIHTSMEAGPMIRKGDMKQAAWIGAYEQWNVDIGLECGLSGHAQIGKGMWAMPDMMAAMLEQKIAHPKAGANTAWVPSPTAATLHATHYHKIDVAAVQEKLKSRPRAKLDDILSVPVAVRPNWTPDDIQHEIDNNAQGILGYVVRWIDQGVGCSKVPDINNVGLMEDRATLRISAQHIANWLYHGVVSEAQVMETMKRMAAIVDKQNEGDPLYRPMAADFDKSIAFQAACDLVFKGREQPNGYTEPVLHRRRLELKQAS</sequence>
<accession>Q8FZ50</accession>
<accession>G0K6I2</accession>